<gene>
    <name type="ORF">MCYG_06955</name>
</gene>
<dbReference type="EC" id="3.4.23.-"/>
<dbReference type="EMBL" id="DS995706">
    <property type="protein sequence ID" value="EEQ34136.1"/>
    <property type="molecule type" value="Genomic_DNA"/>
</dbReference>
<dbReference type="RefSeq" id="XP_002844991.1">
    <property type="nucleotide sequence ID" value="XM_002844945.1"/>
</dbReference>
<dbReference type="SMR" id="C5FW52"/>
<dbReference type="STRING" id="554155.C5FW52"/>
<dbReference type="GeneID" id="9228217"/>
<dbReference type="VEuPathDB" id="FungiDB:MCYG_06955"/>
<dbReference type="eggNOG" id="KOG1339">
    <property type="taxonomic scope" value="Eukaryota"/>
</dbReference>
<dbReference type="HOGENOM" id="CLU_013253_0_1_1"/>
<dbReference type="OMA" id="HRIYHPE"/>
<dbReference type="OrthoDB" id="2747330at2759"/>
<dbReference type="Proteomes" id="UP000002035">
    <property type="component" value="Unassembled WGS sequence"/>
</dbReference>
<dbReference type="GO" id="GO:0005576">
    <property type="term" value="C:extracellular region"/>
    <property type="evidence" value="ECO:0007669"/>
    <property type="project" value="UniProtKB-SubCell"/>
</dbReference>
<dbReference type="GO" id="GO:0004190">
    <property type="term" value="F:aspartic-type endopeptidase activity"/>
    <property type="evidence" value="ECO:0007669"/>
    <property type="project" value="UniProtKB-KW"/>
</dbReference>
<dbReference type="GO" id="GO:0006508">
    <property type="term" value="P:proteolysis"/>
    <property type="evidence" value="ECO:0007669"/>
    <property type="project" value="UniProtKB-KW"/>
</dbReference>
<dbReference type="CDD" id="cd06097">
    <property type="entry name" value="Aspergillopepsin_like"/>
    <property type="match status" value="1"/>
</dbReference>
<dbReference type="Gene3D" id="2.40.70.10">
    <property type="entry name" value="Acid Proteases"/>
    <property type="match status" value="2"/>
</dbReference>
<dbReference type="InterPro" id="IPR001461">
    <property type="entry name" value="Aspartic_peptidase_A1"/>
</dbReference>
<dbReference type="InterPro" id="IPR034163">
    <property type="entry name" value="Aspergillopepsin-like_cat_dom"/>
</dbReference>
<dbReference type="InterPro" id="IPR033121">
    <property type="entry name" value="PEPTIDASE_A1"/>
</dbReference>
<dbReference type="InterPro" id="IPR021109">
    <property type="entry name" value="Peptidase_aspartic_dom_sf"/>
</dbReference>
<dbReference type="PANTHER" id="PTHR47966:SF2">
    <property type="entry name" value="ASPERGILLOPEPSIN-1-RELATED"/>
    <property type="match status" value="1"/>
</dbReference>
<dbReference type="PANTHER" id="PTHR47966">
    <property type="entry name" value="BETA-SITE APP-CLEAVING ENZYME, ISOFORM A-RELATED"/>
    <property type="match status" value="1"/>
</dbReference>
<dbReference type="Pfam" id="PF00026">
    <property type="entry name" value="Asp"/>
    <property type="match status" value="2"/>
</dbReference>
<dbReference type="PRINTS" id="PR00792">
    <property type="entry name" value="PEPSIN"/>
</dbReference>
<dbReference type="SUPFAM" id="SSF50630">
    <property type="entry name" value="Acid proteases"/>
    <property type="match status" value="1"/>
</dbReference>
<dbReference type="PROSITE" id="PS00141">
    <property type="entry name" value="ASP_PROTEASE"/>
    <property type="match status" value="1"/>
</dbReference>
<dbReference type="PROSITE" id="PS51767">
    <property type="entry name" value="PEPTIDASE_A1"/>
    <property type="match status" value="1"/>
</dbReference>
<comment type="function">
    <text evidence="1">Probable aspartic-type endopeptidase which contributes to virulence.</text>
</comment>
<comment type="subcellular location">
    <subcellularLocation>
        <location evidence="1">Secreted</location>
    </subcellularLocation>
</comment>
<comment type="similarity">
    <text evidence="5">Belongs to the peptidase A1 family.</text>
</comment>
<accession>C5FW52</accession>
<reference key="1">
    <citation type="journal article" date="2012" name="MBio">
        <title>Comparative genome analysis of Trichophyton rubrum and related dermatophytes reveals candidate genes involved in infection.</title>
        <authorList>
            <person name="Martinez D.A."/>
            <person name="Oliver B.G."/>
            <person name="Graeser Y."/>
            <person name="Goldberg J.M."/>
            <person name="Li W."/>
            <person name="Martinez-Rossi N.M."/>
            <person name="Monod M."/>
            <person name="Shelest E."/>
            <person name="Barton R.C."/>
            <person name="Birch E."/>
            <person name="Brakhage A.A."/>
            <person name="Chen Z."/>
            <person name="Gurr S.J."/>
            <person name="Heiman D."/>
            <person name="Heitman J."/>
            <person name="Kosti I."/>
            <person name="Rossi A."/>
            <person name="Saif S."/>
            <person name="Samalova M."/>
            <person name="Saunders C.W."/>
            <person name="Shea T."/>
            <person name="Summerbell R.C."/>
            <person name="Xu J."/>
            <person name="Young S."/>
            <person name="Zeng Q."/>
            <person name="Birren B.W."/>
            <person name="Cuomo C.A."/>
            <person name="White T.C."/>
        </authorList>
    </citation>
    <scope>NUCLEOTIDE SEQUENCE [LARGE SCALE GENOMIC DNA]</scope>
    <source>
        <strain>ATCC MYA-4605 / CBS 113480</strain>
    </source>
</reference>
<feature type="signal peptide" evidence="2">
    <location>
        <begin position="1"/>
        <end position="21"/>
    </location>
</feature>
<feature type="chain" id="PRO_0000406415" description="Probable aspartic-type endopeptidase MCYG_06955">
    <location>
        <begin position="22"/>
        <end position="388"/>
    </location>
</feature>
<feature type="domain" description="Peptidase A1" evidence="3">
    <location>
        <begin position="96"/>
        <end position="384"/>
    </location>
</feature>
<feature type="active site" evidence="4">
    <location>
        <position position="112"/>
    </location>
</feature>
<feature type="active site" evidence="4">
    <location>
        <position position="278"/>
    </location>
</feature>
<feature type="glycosylation site" description="N-linked (GlcNAc...) asparagine" evidence="2">
    <location>
        <position position="82"/>
    </location>
</feature>
<feature type="glycosylation site" description="N-linked (GlcNAc...) asparagine" evidence="2">
    <location>
        <position position="104"/>
    </location>
</feature>
<feature type="glycosylation site" description="N-linked (GlcNAc...) asparagine" evidence="2">
    <location>
        <position position="209"/>
    </location>
</feature>
<feature type="glycosylation site" description="N-linked (GlcNAc...) asparagine" evidence="2">
    <location>
        <position position="261"/>
    </location>
</feature>
<feature type="glycosylation site" description="N-linked (GlcNAc...) asparagine" evidence="2">
    <location>
        <position position="315"/>
    </location>
</feature>
<feature type="glycosylation site" description="N-linked (GlcNAc...) asparagine" evidence="2">
    <location>
        <position position="320"/>
    </location>
</feature>
<proteinExistence type="inferred from homology"/>
<protein>
    <recommendedName>
        <fullName>Probable aspartic-type endopeptidase MCYG_06955</fullName>
        <ecNumber>3.4.23.-</ecNumber>
    </recommendedName>
</protein>
<organism>
    <name type="scientific">Arthroderma otae (strain ATCC MYA-4605 / CBS 113480)</name>
    <name type="common">Microsporum canis</name>
    <dbReference type="NCBI Taxonomy" id="554155"/>
    <lineage>
        <taxon>Eukaryota</taxon>
        <taxon>Fungi</taxon>
        <taxon>Dikarya</taxon>
        <taxon>Ascomycota</taxon>
        <taxon>Pezizomycotina</taxon>
        <taxon>Eurotiomycetes</taxon>
        <taxon>Eurotiomycetidae</taxon>
        <taxon>Onygenales</taxon>
        <taxon>Arthrodermataceae</taxon>
        <taxon>Microsporum</taxon>
    </lineage>
</organism>
<evidence type="ECO:0000250" key="1"/>
<evidence type="ECO:0000255" key="2"/>
<evidence type="ECO:0000255" key="3">
    <source>
        <dbReference type="PROSITE-ProRule" id="PRU01103"/>
    </source>
</evidence>
<evidence type="ECO:0000255" key="4">
    <source>
        <dbReference type="PROSITE-ProRule" id="PRU10094"/>
    </source>
</evidence>
<evidence type="ECO:0000305" key="5"/>
<name>Y6955_ARTOC</name>
<sequence length="388" mass="43509">MMGPFFYFTAYVSLLFAFTQALPTINGATAGLFSIEQKQYRSNRVNWPPYELWRTLRKHHRPPPRGMTAVSRIKAYGEHTINGTVEVTPSEYDTEFVNEITVGNDTLYVDIDTGSSDFWVFSSQLPEQSQRNHRIYHPEETGTKLPKHTWESKYGDGTGAAGNVFLDKVNLAGLKVSSQAVEAATWVSYEFVDQQTTDGVMGFGFDNFNLTCLKHQAPGFYDFGFIDGTKHVGKPTYLPIDSLRGWWETTFNGFSAGDIDNSTYRFKAVIGINFELPDTGTTFMLLPKQITEQYYSTVPASMYDRNNGGWAFPCNTTLPNFTIHINDHKAIVPGEHIRWAQLPGTNTCFGGLQPVNNPPAILGGTFLKSQFVIFDYDGPKIGFAAQRN</sequence>
<keyword id="KW-0064">Aspartyl protease</keyword>
<keyword id="KW-0325">Glycoprotein</keyword>
<keyword id="KW-0378">Hydrolase</keyword>
<keyword id="KW-0645">Protease</keyword>
<keyword id="KW-1185">Reference proteome</keyword>
<keyword id="KW-0964">Secreted</keyword>
<keyword id="KW-0732">Signal</keyword>
<keyword id="KW-0843">Virulence</keyword>